<name>COXX_NITEU</name>
<reference key="1">
    <citation type="journal article" date="2003" name="J. Bacteriol.">
        <title>Complete genome sequence of the ammonia-oxidizing bacterium and obligate chemolithoautotroph Nitrosomonas europaea.</title>
        <authorList>
            <person name="Chain P."/>
            <person name="Lamerdin J.E."/>
            <person name="Larimer F.W."/>
            <person name="Regala W."/>
            <person name="Lao V."/>
            <person name="Land M.L."/>
            <person name="Hauser L."/>
            <person name="Hooper A.B."/>
            <person name="Klotz M.G."/>
            <person name="Norton J."/>
            <person name="Sayavedra-Soto L.A."/>
            <person name="Arciero D.M."/>
            <person name="Hommes N.G."/>
            <person name="Whittaker M.M."/>
            <person name="Arp D.J."/>
        </authorList>
    </citation>
    <scope>NUCLEOTIDE SEQUENCE [LARGE SCALE GENOMIC DNA]</scope>
    <source>
        <strain>ATCC 19718 / CIP 103999 / KCTC 2705 / NBRC 14298</strain>
    </source>
</reference>
<protein>
    <recommendedName>
        <fullName evidence="1">Protoheme IX farnesyltransferase</fullName>
        <ecNumber evidence="1">2.5.1.141</ecNumber>
    </recommendedName>
    <alternativeName>
        <fullName evidence="1">Heme B farnesyltransferase</fullName>
    </alternativeName>
    <alternativeName>
        <fullName evidence="1">Heme O synthase</fullName>
    </alternativeName>
</protein>
<keyword id="KW-0997">Cell inner membrane</keyword>
<keyword id="KW-1003">Cell membrane</keyword>
<keyword id="KW-0350">Heme biosynthesis</keyword>
<keyword id="KW-0472">Membrane</keyword>
<keyword id="KW-1185">Reference proteome</keyword>
<keyword id="KW-0808">Transferase</keyword>
<keyword id="KW-0812">Transmembrane</keyword>
<keyword id="KW-1133">Transmembrane helix</keyword>
<evidence type="ECO:0000255" key="1">
    <source>
        <dbReference type="HAMAP-Rule" id="MF_00154"/>
    </source>
</evidence>
<dbReference type="EC" id="2.5.1.141" evidence="1"/>
<dbReference type="EMBL" id="AL954747">
    <property type="protein sequence ID" value="CAD84921.1"/>
    <property type="molecule type" value="Genomic_DNA"/>
</dbReference>
<dbReference type="SMR" id="Q82VQ6"/>
<dbReference type="STRING" id="228410.NE1010"/>
<dbReference type="GeneID" id="87104201"/>
<dbReference type="KEGG" id="neu:NE1010"/>
<dbReference type="eggNOG" id="COG0109">
    <property type="taxonomic scope" value="Bacteria"/>
</dbReference>
<dbReference type="HOGENOM" id="CLU_029631_0_2_4"/>
<dbReference type="OrthoDB" id="9814417at2"/>
<dbReference type="PhylomeDB" id="Q82VQ6"/>
<dbReference type="UniPathway" id="UPA00834">
    <property type="reaction ID" value="UER00712"/>
</dbReference>
<dbReference type="Proteomes" id="UP000001416">
    <property type="component" value="Chromosome"/>
</dbReference>
<dbReference type="GO" id="GO:0005886">
    <property type="term" value="C:plasma membrane"/>
    <property type="evidence" value="ECO:0007669"/>
    <property type="project" value="UniProtKB-SubCell"/>
</dbReference>
<dbReference type="GO" id="GO:0008495">
    <property type="term" value="F:protoheme IX farnesyltransferase activity"/>
    <property type="evidence" value="ECO:0007669"/>
    <property type="project" value="UniProtKB-UniRule"/>
</dbReference>
<dbReference type="GO" id="GO:0048034">
    <property type="term" value="P:heme O biosynthetic process"/>
    <property type="evidence" value="ECO:0007669"/>
    <property type="project" value="UniProtKB-UniRule"/>
</dbReference>
<dbReference type="CDD" id="cd13957">
    <property type="entry name" value="PT_UbiA_Cox10"/>
    <property type="match status" value="1"/>
</dbReference>
<dbReference type="Gene3D" id="1.10.357.140">
    <property type="entry name" value="UbiA prenyltransferase"/>
    <property type="match status" value="1"/>
</dbReference>
<dbReference type="HAMAP" id="MF_00154">
    <property type="entry name" value="CyoE_CtaB"/>
    <property type="match status" value="1"/>
</dbReference>
<dbReference type="InterPro" id="IPR006369">
    <property type="entry name" value="Protohaem_IX_farnesylTrfase"/>
</dbReference>
<dbReference type="InterPro" id="IPR000537">
    <property type="entry name" value="UbiA_prenyltransferase"/>
</dbReference>
<dbReference type="InterPro" id="IPR030470">
    <property type="entry name" value="UbiA_prenylTrfase_CS"/>
</dbReference>
<dbReference type="InterPro" id="IPR044878">
    <property type="entry name" value="UbiA_sf"/>
</dbReference>
<dbReference type="NCBIfam" id="TIGR01473">
    <property type="entry name" value="cyoE_ctaB"/>
    <property type="match status" value="1"/>
</dbReference>
<dbReference type="NCBIfam" id="NF003349">
    <property type="entry name" value="PRK04375.1-2"/>
    <property type="match status" value="1"/>
</dbReference>
<dbReference type="PANTHER" id="PTHR43448:SF7">
    <property type="entry name" value="4-HYDROXYBENZOATE SOLANESYLTRANSFERASE"/>
    <property type="match status" value="1"/>
</dbReference>
<dbReference type="PANTHER" id="PTHR43448">
    <property type="entry name" value="PROTOHEME IX FARNESYLTRANSFERASE, MITOCHONDRIAL"/>
    <property type="match status" value="1"/>
</dbReference>
<dbReference type="Pfam" id="PF01040">
    <property type="entry name" value="UbiA"/>
    <property type="match status" value="1"/>
</dbReference>
<dbReference type="PROSITE" id="PS00943">
    <property type="entry name" value="UBIA"/>
    <property type="match status" value="1"/>
</dbReference>
<gene>
    <name evidence="1" type="primary">ctaB</name>
    <name type="ordered locus">NE1010</name>
</gene>
<organism>
    <name type="scientific">Nitrosomonas europaea (strain ATCC 19718 / CIP 103999 / KCTC 2705 / NBRC 14298)</name>
    <dbReference type="NCBI Taxonomy" id="228410"/>
    <lineage>
        <taxon>Bacteria</taxon>
        <taxon>Pseudomonadati</taxon>
        <taxon>Pseudomonadota</taxon>
        <taxon>Betaproteobacteria</taxon>
        <taxon>Nitrosomonadales</taxon>
        <taxon>Nitrosomonadaceae</taxon>
        <taxon>Nitrosomonas</taxon>
    </lineage>
</organism>
<accession>Q82VQ6</accession>
<comment type="function">
    <text evidence="1">Converts heme B (protoheme IX) to heme O by substitution of the vinyl group on carbon 2 of heme B porphyrin ring with a hydroxyethyl farnesyl side group.</text>
</comment>
<comment type="catalytic activity">
    <reaction evidence="1">
        <text>heme b + (2E,6E)-farnesyl diphosphate + H2O = Fe(II)-heme o + diphosphate</text>
        <dbReference type="Rhea" id="RHEA:28070"/>
        <dbReference type="ChEBI" id="CHEBI:15377"/>
        <dbReference type="ChEBI" id="CHEBI:33019"/>
        <dbReference type="ChEBI" id="CHEBI:60344"/>
        <dbReference type="ChEBI" id="CHEBI:60530"/>
        <dbReference type="ChEBI" id="CHEBI:175763"/>
        <dbReference type="EC" id="2.5.1.141"/>
    </reaction>
</comment>
<comment type="pathway">
    <text evidence="1">Porphyrin-containing compound metabolism; heme O biosynthesis; heme O from protoheme: step 1/1.</text>
</comment>
<comment type="subcellular location">
    <subcellularLocation>
        <location evidence="1">Cell inner membrane</location>
        <topology evidence="1">Multi-pass membrane protein</topology>
    </subcellularLocation>
</comment>
<comment type="miscellaneous">
    <text evidence="1">Carbon 2 of the heme B porphyrin ring is defined according to the Fischer nomenclature.</text>
</comment>
<comment type="similarity">
    <text evidence="1">Belongs to the UbiA prenyltransferase family. Protoheme IX farnesyltransferase subfamily.</text>
</comment>
<sequence length="298" mass="33152">MTTSSLAWQQATARVQQFYRLTKPRVVSLIVFTAVIGMFLSVPGAVPLDKLIFGTVGISLVAGAAAALNCLVEYKFDAIMARTKGRPLPQGKVSVPETLFFLVLIGGFGLFMLHQWVNPLTMWLTLGTFVGYAIIYTVILKPLTPQNIVIGGASGAMPPVLGWAAVTGEISADALLLFLIIFAWTPPHFWALALYRKTDYAKIGMPMLPVTHGDEFTRLHVLLYTIILCVVTVLPYLTQMSGLIYLGSVLILDAIFFYYAIRIYLHYTDQIAREAFRYSIAYLALLFTALLVDHYFYF</sequence>
<feature type="chain" id="PRO_0000327099" description="Protoheme IX farnesyltransferase">
    <location>
        <begin position="1"/>
        <end position="298"/>
    </location>
</feature>
<feature type="transmembrane region" description="Helical" evidence="1">
    <location>
        <begin position="26"/>
        <end position="46"/>
    </location>
</feature>
<feature type="transmembrane region" description="Helical" evidence="1">
    <location>
        <begin position="52"/>
        <end position="72"/>
    </location>
</feature>
<feature type="transmembrane region" description="Helical" evidence="1">
    <location>
        <begin position="93"/>
        <end position="113"/>
    </location>
</feature>
<feature type="transmembrane region" description="Helical" evidence="1">
    <location>
        <begin position="120"/>
        <end position="140"/>
    </location>
</feature>
<feature type="transmembrane region" description="Helical" evidence="1">
    <location>
        <begin position="148"/>
        <end position="168"/>
    </location>
</feature>
<feature type="transmembrane region" description="Helical" evidence="1">
    <location>
        <begin position="174"/>
        <end position="194"/>
    </location>
</feature>
<feature type="transmembrane region" description="Helical" evidence="1">
    <location>
        <begin position="219"/>
        <end position="239"/>
    </location>
</feature>
<feature type="transmembrane region" description="Helical" evidence="1">
    <location>
        <begin position="241"/>
        <end position="261"/>
    </location>
</feature>
<feature type="transmembrane region" description="Helical" evidence="1">
    <location>
        <begin position="278"/>
        <end position="298"/>
    </location>
</feature>
<proteinExistence type="inferred from homology"/>